<protein>
    <recommendedName>
        <fullName>Zinc finger CCCH domain-containing protein 40</fullName>
        <shortName>OsC3H40</shortName>
    </recommendedName>
</protein>
<proteinExistence type="evidence at transcript level"/>
<gene>
    <name type="ordered locus">Os06g0170500</name>
    <name type="ordered locus">LOC_Os06g07350</name>
    <name type="ORF">OsJ_019459</name>
    <name type="ORF">P0675A05.7</name>
</gene>
<reference key="1">
    <citation type="journal article" date="2005" name="Nature">
        <title>The map-based sequence of the rice genome.</title>
        <authorList>
            <consortium name="International rice genome sequencing project (IRGSP)"/>
        </authorList>
    </citation>
    <scope>NUCLEOTIDE SEQUENCE [LARGE SCALE GENOMIC DNA]</scope>
    <source>
        <strain>cv. Nipponbare</strain>
    </source>
</reference>
<reference key="2">
    <citation type="journal article" date="2008" name="Nucleic Acids Res.">
        <title>The rice annotation project database (RAP-DB): 2008 update.</title>
        <authorList>
            <consortium name="The rice annotation project (RAP)"/>
        </authorList>
    </citation>
    <scope>GENOME REANNOTATION</scope>
    <source>
        <strain>cv. Nipponbare</strain>
    </source>
</reference>
<reference key="3">
    <citation type="journal article" date="2013" name="Rice">
        <title>Improvement of the Oryza sativa Nipponbare reference genome using next generation sequence and optical map data.</title>
        <authorList>
            <person name="Kawahara Y."/>
            <person name="de la Bastide M."/>
            <person name="Hamilton J.P."/>
            <person name="Kanamori H."/>
            <person name="McCombie W.R."/>
            <person name="Ouyang S."/>
            <person name="Schwartz D.C."/>
            <person name="Tanaka T."/>
            <person name="Wu J."/>
            <person name="Zhou S."/>
            <person name="Childs K.L."/>
            <person name="Davidson R.M."/>
            <person name="Lin H."/>
            <person name="Quesada-Ocampo L."/>
            <person name="Vaillancourt B."/>
            <person name="Sakai H."/>
            <person name="Lee S.S."/>
            <person name="Kim J."/>
            <person name="Numa H."/>
            <person name="Itoh T."/>
            <person name="Buell C.R."/>
            <person name="Matsumoto T."/>
        </authorList>
    </citation>
    <scope>GENOME REANNOTATION</scope>
    <source>
        <strain>cv. Nipponbare</strain>
    </source>
</reference>
<reference key="4">
    <citation type="journal article" date="2005" name="PLoS Biol.">
        <title>The genomes of Oryza sativa: a history of duplications.</title>
        <authorList>
            <person name="Yu J."/>
            <person name="Wang J."/>
            <person name="Lin W."/>
            <person name="Li S."/>
            <person name="Li H."/>
            <person name="Zhou J."/>
            <person name="Ni P."/>
            <person name="Dong W."/>
            <person name="Hu S."/>
            <person name="Zeng C."/>
            <person name="Zhang J."/>
            <person name="Zhang Y."/>
            <person name="Li R."/>
            <person name="Xu Z."/>
            <person name="Li S."/>
            <person name="Li X."/>
            <person name="Zheng H."/>
            <person name="Cong L."/>
            <person name="Lin L."/>
            <person name="Yin J."/>
            <person name="Geng J."/>
            <person name="Li G."/>
            <person name="Shi J."/>
            <person name="Liu J."/>
            <person name="Lv H."/>
            <person name="Li J."/>
            <person name="Wang J."/>
            <person name="Deng Y."/>
            <person name="Ran L."/>
            <person name="Shi X."/>
            <person name="Wang X."/>
            <person name="Wu Q."/>
            <person name="Li C."/>
            <person name="Ren X."/>
            <person name="Wang J."/>
            <person name="Wang X."/>
            <person name="Li D."/>
            <person name="Liu D."/>
            <person name="Zhang X."/>
            <person name="Ji Z."/>
            <person name="Zhao W."/>
            <person name="Sun Y."/>
            <person name="Zhang Z."/>
            <person name="Bao J."/>
            <person name="Han Y."/>
            <person name="Dong L."/>
            <person name="Ji J."/>
            <person name="Chen P."/>
            <person name="Wu S."/>
            <person name="Liu J."/>
            <person name="Xiao Y."/>
            <person name="Bu D."/>
            <person name="Tan J."/>
            <person name="Yang L."/>
            <person name="Ye C."/>
            <person name="Zhang J."/>
            <person name="Xu J."/>
            <person name="Zhou Y."/>
            <person name="Yu Y."/>
            <person name="Zhang B."/>
            <person name="Zhuang S."/>
            <person name="Wei H."/>
            <person name="Liu B."/>
            <person name="Lei M."/>
            <person name="Yu H."/>
            <person name="Li Y."/>
            <person name="Xu H."/>
            <person name="Wei S."/>
            <person name="He X."/>
            <person name="Fang L."/>
            <person name="Zhang Z."/>
            <person name="Zhang Y."/>
            <person name="Huang X."/>
            <person name="Su Z."/>
            <person name="Tong W."/>
            <person name="Li J."/>
            <person name="Tong Z."/>
            <person name="Li S."/>
            <person name="Ye J."/>
            <person name="Wang L."/>
            <person name="Fang L."/>
            <person name="Lei T."/>
            <person name="Chen C.-S."/>
            <person name="Chen H.-C."/>
            <person name="Xu Z."/>
            <person name="Li H."/>
            <person name="Huang H."/>
            <person name="Zhang F."/>
            <person name="Xu H."/>
            <person name="Li N."/>
            <person name="Zhao C."/>
            <person name="Li S."/>
            <person name="Dong L."/>
            <person name="Huang Y."/>
            <person name="Li L."/>
            <person name="Xi Y."/>
            <person name="Qi Q."/>
            <person name="Li W."/>
            <person name="Zhang B."/>
            <person name="Hu W."/>
            <person name="Zhang Y."/>
            <person name="Tian X."/>
            <person name="Jiao Y."/>
            <person name="Liang X."/>
            <person name="Jin J."/>
            <person name="Gao L."/>
            <person name="Zheng W."/>
            <person name="Hao B."/>
            <person name="Liu S.-M."/>
            <person name="Wang W."/>
            <person name="Yuan L."/>
            <person name="Cao M."/>
            <person name="McDermott J."/>
            <person name="Samudrala R."/>
            <person name="Wang J."/>
            <person name="Wong G.K.-S."/>
            <person name="Yang H."/>
        </authorList>
    </citation>
    <scope>NUCLEOTIDE SEQUENCE [LARGE SCALE GENOMIC DNA]</scope>
    <source>
        <strain>cv. Nipponbare</strain>
    </source>
</reference>
<reference key="5">
    <citation type="journal article" date="2003" name="Science">
        <title>Collection, mapping, and annotation of over 28,000 cDNA clones from japonica rice.</title>
        <authorList>
            <consortium name="The rice full-length cDNA consortium"/>
        </authorList>
    </citation>
    <scope>NUCLEOTIDE SEQUENCE [LARGE SCALE MRNA]</scope>
    <source>
        <strain>cv. Nipponbare</strain>
    </source>
</reference>
<reference key="6">
    <citation type="journal article" date="2008" name="BMC Genomics">
        <title>Genome-wide analysis of CCCH zinc finger family in Arabidopsis and rice.</title>
        <authorList>
            <person name="Wang D."/>
            <person name="Guo Y."/>
            <person name="Wu C."/>
            <person name="Yang G."/>
            <person name="Li Y."/>
            <person name="Zheng C."/>
        </authorList>
    </citation>
    <scope>NOMENCLATURE</scope>
</reference>
<keyword id="KW-0238">DNA-binding</keyword>
<keyword id="KW-0479">Metal-binding</keyword>
<keyword id="KW-1185">Reference proteome</keyword>
<keyword id="KW-0694">RNA-binding</keyword>
<keyword id="KW-0862">Zinc</keyword>
<keyword id="KW-0863">Zinc-finger</keyword>
<organism>
    <name type="scientific">Oryza sativa subsp. japonica</name>
    <name type="common">Rice</name>
    <dbReference type="NCBI Taxonomy" id="39947"/>
    <lineage>
        <taxon>Eukaryota</taxon>
        <taxon>Viridiplantae</taxon>
        <taxon>Streptophyta</taxon>
        <taxon>Embryophyta</taxon>
        <taxon>Tracheophyta</taxon>
        <taxon>Spermatophyta</taxon>
        <taxon>Magnoliopsida</taxon>
        <taxon>Liliopsida</taxon>
        <taxon>Poales</taxon>
        <taxon>Poaceae</taxon>
        <taxon>BOP clade</taxon>
        <taxon>Oryzoideae</taxon>
        <taxon>Oryzeae</taxon>
        <taxon>Oryzinae</taxon>
        <taxon>Oryza</taxon>
        <taxon>Oryza sativa</taxon>
    </lineage>
</organism>
<name>C3H40_ORYSJ</name>
<dbReference type="EMBL" id="AP002071">
    <property type="protein sequence ID" value="BAD72175.1"/>
    <property type="molecule type" value="Genomic_DNA"/>
</dbReference>
<dbReference type="EMBL" id="AP008212">
    <property type="protein sequence ID" value="BAF18845.1"/>
    <property type="molecule type" value="Genomic_DNA"/>
</dbReference>
<dbReference type="EMBL" id="AP014962">
    <property type="protein sequence ID" value="BAS96372.1"/>
    <property type="molecule type" value="Genomic_DNA"/>
</dbReference>
<dbReference type="EMBL" id="CM000143">
    <property type="protein sequence ID" value="EAZ35976.1"/>
    <property type="molecule type" value="Genomic_DNA"/>
</dbReference>
<dbReference type="EMBL" id="AK120360">
    <property type="protein sequence ID" value="BAG99980.1"/>
    <property type="molecule type" value="mRNA"/>
</dbReference>
<dbReference type="RefSeq" id="XP_015643850.1">
    <property type="nucleotide sequence ID" value="XM_015788364.1"/>
</dbReference>
<dbReference type="SMR" id="Q5SNN4"/>
<dbReference type="FunCoup" id="Q5SNN4">
    <property type="interactions" value="2800"/>
</dbReference>
<dbReference type="STRING" id="39947.Q5SNN4"/>
<dbReference type="PaxDb" id="39947-Q5SNN4"/>
<dbReference type="EnsemblPlants" id="Os06t0170500-01">
    <property type="protein sequence ID" value="Os06t0170500-01"/>
    <property type="gene ID" value="Os06g0170500"/>
</dbReference>
<dbReference type="Gramene" id="Os06t0170500-01">
    <property type="protein sequence ID" value="Os06t0170500-01"/>
    <property type="gene ID" value="Os06g0170500"/>
</dbReference>
<dbReference type="KEGG" id="dosa:Os06g0170500"/>
<dbReference type="eggNOG" id="KOG0153">
    <property type="taxonomic scope" value="Eukaryota"/>
</dbReference>
<dbReference type="HOGENOM" id="CLU_027112_2_0_1"/>
<dbReference type="InParanoid" id="Q5SNN4"/>
<dbReference type="OMA" id="ECICARP"/>
<dbReference type="OrthoDB" id="10259600at2759"/>
<dbReference type="Proteomes" id="UP000000763">
    <property type="component" value="Chromosome 6"/>
</dbReference>
<dbReference type="Proteomes" id="UP000007752">
    <property type="component" value="Chromosome 6"/>
</dbReference>
<dbReference type="Proteomes" id="UP000059680">
    <property type="component" value="Chromosome 6"/>
</dbReference>
<dbReference type="ExpressionAtlas" id="Q5SNN4">
    <property type="expression patterns" value="baseline and differential"/>
</dbReference>
<dbReference type="GO" id="GO:0000974">
    <property type="term" value="C:Prp19 complex"/>
    <property type="evidence" value="ECO:0000318"/>
    <property type="project" value="GO_Central"/>
</dbReference>
<dbReference type="GO" id="GO:0071006">
    <property type="term" value="C:U2-type catalytic step 1 spliceosome"/>
    <property type="evidence" value="ECO:0000318"/>
    <property type="project" value="GO_Central"/>
</dbReference>
<dbReference type="GO" id="GO:0071007">
    <property type="term" value="C:U2-type catalytic step 2 spliceosome"/>
    <property type="evidence" value="ECO:0000318"/>
    <property type="project" value="GO_Central"/>
</dbReference>
<dbReference type="GO" id="GO:0003677">
    <property type="term" value="F:DNA binding"/>
    <property type="evidence" value="ECO:0007669"/>
    <property type="project" value="UniProtKB-KW"/>
</dbReference>
<dbReference type="GO" id="GO:0036002">
    <property type="term" value="F:pre-mRNA binding"/>
    <property type="evidence" value="ECO:0000318"/>
    <property type="project" value="GO_Central"/>
</dbReference>
<dbReference type="GO" id="GO:0017070">
    <property type="term" value="F:U6 snRNA binding"/>
    <property type="evidence" value="ECO:0000318"/>
    <property type="project" value="GO_Central"/>
</dbReference>
<dbReference type="GO" id="GO:0008270">
    <property type="term" value="F:zinc ion binding"/>
    <property type="evidence" value="ECO:0007669"/>
    <property type="project" value="UniProtKB-KW"/>
</dbReference>
<dbReference type="CDD" id="cd12224">
    <property type="entry name" value="RRM_RBM22"/>
    <property type="match status" value="1"/>
</dbReference>
<dbReference type="FunFam" id="4.10.1000.10:FF:000036">
    <property type="entry name" value="Zinc finger CCCH domain-containing protein 4"/>
    <property type="match status" value="1"/>
</dbReference>
<dbReference type="FunFam" id="3.30.70.330:FF:000347">
    <property type="entry name" value="Zinc finger CCCH domain-containing protein 40"/>
    <property type="match status" value="1"/>
</dbReference>
<dbReference type="Gene3D" id="3.30.70.330">
    <property type="match status" value="1"/>
</dbReference>
<dbReference type="Gene3D" id="4.10.1000.10">
    <property type="entry name" value="Zinc finger, CCCH-type"/>
    <property type="match status" value="1"/>
</dbReference>
<dbReference type="InterPro" id="IPR039171">
    <property type="entry name" value="Cwc2/Slt11"/>
</dbReference>
<dbReference type="InterPro" id="IPR012677">
    <property type="entry name" value="Nucleotide-bd_a/b_plait_sf"/>
</dbReference>
<dbReference type="InterPro" id="IPR035979">
    <property type="entry name" value="RBD_domain_sf"/>
</dbReference>
<dbReference type="InterPro" id="IPR000504">
    <property type="entry name" value="RRM_dom"/>
</dbReference>
<dbReference type="InterPro" id="IPR048995">
    <property type="entry name" value="STL11/RBM22-like_N"/>
</dbReference>
<dbReference type="InterPro" id="IPR032297">
    <property type="entry name" value="Torus"/>
</dbReference>
<dbReference type="InterPro" id="IPR000571">
    <property type="entry name" value="Znf_CCCH"/>
</dbReference>
<dbReference type="InterPro" id="IPR036855">
    <property type="entry name" value="Znf_CCCH_sf"/>
</dbReference>
<dbReference type="PANTHER" id="PTHR14089">
    <property type="entry name" value="PRE-MRNA-SPLICING FACTOR RBM22"/>
    <property type="match status" value="1"/>
</dbReference>
<dbReference type="PANTHER" id="PTHR14089:SF6">
    <property type="entry name" value="PRE-MRNA-SPLICING FACTOR RBM22"/>
    <property type="match status" value="1"/>
</dbReference>
<dbReference type="Pfam" id="PF00076">
    <property type="entry name" value="RRM_1"/>
    <property type="match status" value="1"/>
</dbReference>
<dbReference type="Pfam" id="PF21369">
    <property type="entry name" value="STL11_N"/>
    <property type="match status" value="1"/>
</dbReference>
<dbReference type="Pfam" id="PF16131">
    <property type="entry name" value="Torus"/>
    <property type="match status" value="1"/>
</dbReference>
<dbReference type="SMART" id="SM00360">
    <property type="entry name" value="RRM"/>
    <property type="match status" value="1"/>
</dbReference>
<dbReference type="SMART" id="SM00356">
    <property type="entry name" value="ZnF_C3H1"/>
    <property type="match status" value="1"/>
</dbReference>
<dbReference type="SUPFAM" id="SSF90229">
    <property type="entry name" value="CCCH zinc finger"/>
    <property type="match status" value="1"/>
</dbReference>
<dbReference type="SUPFAM" id="SSF54928">
    <property type="entry name" value="RNA-binding domain, RBD"/>
    <property type="match status" value="1"/>
</dbReference>
<dbReference type="PROSITE" id="PS50102">
    <property type="entry name" value="RRM"/>
    <property type="match status" value="1"/>
</dbReference>
<dbReference type="PROSITE" id="PS50103">
    <property type="entry name" value="ZF_C3H1"/>
    <property type="match status" value="1"/>
</dbReference>
<accession>Q5SNN4</accession>
<accession>B7F5T3</accession>
<evidence type="ECO:0000255" key="1">
    <source>
        <dbReference type="PROSITE-ProRule" id="PRU00176"/>
    </source>
</evidence>
<evidence type="ECO:0000255" key="2">
    <source>
        <dbReference type="PROSITE-ProRule" id="PRU00723"/>
    </source>
</evidence>
<evidence type="ECO:0000256" key="3">
    <source>
        <dbReference type="SAM" id="MobiDB-lite"/>
    </source>
</evidence>
<feature type="chain" id="PRO_0000346834" description="Zinc finger CCCH domain-containing protein 40">
    <location>
        <begin position="1"/>
        <end position="482"/>
    </location>
</feature>
<feature type="domain" description="RRM" evidence="1">
    <location>
        <begin position="228"/>
        <end position="301"/>
    </location>
</feature>
<feature type="zinc finger region" description="C3H1-type" evidence="2">
    <location>
        <begin position="157"/>
        <end position="184"/>
    </location>
</feature>
<feature type="region of interest" description="Disordered" evidence="3">
    <location>
        <begin position="329"/>
        <end position="482"/>
    </location>
</feature>
<feature type="compositionally biased region" description="Low complexity" evidence="3">
    <location>
        <begin position="329"/>
        <end position="347"/>
    </location>
</feature>
<feature type="compositionally biased region" description="Low complexity" evidence="3">
    <location>
        <begin position="389"/>
        <end position="428"/>
    </location>
</feature>
<feature type="compositionally biased region" description="Pro residues" evidence="3">
    <location>
        <begin position="429"/>
        <end position="446"/>
    </location>
</feature>
<feature type="compositionally biased region" description="Low complexity" evidence="3">
    <location>
        <begin position="452"/>
        <end position="466"/>
    </location>
</feature>
<feature type="compositionally biased region" description="Pro residues" evidence="3">
    <location>
        <begin position="473"/>
        <end position="482"/>
    </location>
</feature>
<sequence length="482" mass="54010">MAHRLLRDAQADGWERSDFPIICESCLGDNPYVRMLRAEYDKECKICARPFTVFRWRPGRDARYKKTEICQTCCKLKNVCQVCLLDLEYGLPVQVRDTALAINSNDAIPRSDVNREYFAEEHDRKARAGIDYDSSHGKARPNDTILKLQRTAPYYKRNRAHVCSFYVRGECTRGAECPYRHEMPETGELSQQNIKDRYYGVNDPVALKLLGKAGEMPSLTPPDDESIRTLYIGGLNNRITEQDLRDQFYAHGEIESIRMVLQRACAFVTYTTREGAEKAAEELANKLVIKGIRLKLMWGKPQAPKPEDDEAGRQGHVAHGGMLPRAVISQQQSGDQPQPPGMEGQQQAPSGSYYFNIPAPPGAERTLYPSMDPQRMGALVKSQEGDGKPGPQQAAQAQASSSSGQSYPMPPQYYHGQYPPYYPPYGGYMPPPRMPYPPPPQYPPYQPMLATPAQSQASSSQQPAPATLHQAQVPPPQQTTQN</sequence>